<keyword id="KW-0963">Cytoplasm</keyword>
<keyword id="KW-0521">NADP</keyword>
<keyword id="KW-0560">Oxidoreductase</keyword>
<keyword id="KW-0671">Queuosine biosynthesis</keyword>
<proteinExistence type="inferred from homology"/>
<name>QUEF_BUCAP</name>
<gene>
    <name evidence="1" type="primary">queF</name>
    <name type="ordered locus">BUsg_288</name>
</gene>
<dbReference type="EC" id="1.7.1.13" evidence="1"/>
<dbReference type="EMBL" id="AE013218">
    <property type="protein sequence ID" value="AAM67844.1"/>
    <property type="molecule type" value="Genomic_DNA"/>
</dbReference>
<dbReference type="EMBL" id="U11045">
    <property type="protein sequence ID" value="AAC05800.1"/>
    <property type="molecule type" value="Genomic_DNA"/>
</dbReference>
<dbReference type="RefSeq" id="WP_011053811.1">
    <property type="nucleotide sequence ID" value="NC_004061.1"/>
</dbReference>
<dbReference type="SMR" id="Q8K9N6"/>
<dbReference type="STRING" id="198804.BUsg_288"/>
<dbReference type="GeneID" id="93003758"/>
<dbReference type="KEGG" id="bas:BUsg_288"/>
<dbReference type="eggNOG" id="COG0780">
    <property type="taxonomic scope" value="Bacteria"/>
</dbReference>
<dbReference type="eggNOG" id="COG2904">
    <property type="taxonomic scope" value="Bacteria"/>
</dbReference>
<dbReference type="HOGENOM" id="CLU_054738_0_0_6"/>
<dbReference type="UniPathway" id="UPA00392"/>
<dbReference type="Proteomes" id="UP000000416">
    <property type="component" value="Chromosome"/>
</dbReference>
<dbReference type="GO" id="GO:0005737">
    <property type="term" value="C:cytoplasm"/>
    <property type="evidence" value="ECO:0007669"/>
    <property type="project" value="UniProtKB-SubCell"/>
</dbReference>
<dbReference type="GO" id="GO:0033739">
    <property type="term" value="F:preQ1 synthase activity"/>
    <property type="evidence" value="ECO:0007669"/>
    <property type="project" value="UniProtKB-UniRule"/>
</dbReference>
<dbReference type="GO" id="GO:0008616">
    <property type="term" value="P:queuosine biosynthetic process"/>
    <property type="evidence" value="ECO:0007669"/>
    <property type="project" value="UniProtKB-UniRule"/>
</dbReference>
<dbReference type="GO" id="GO:0006400">
    <property type="term" value="P:tRNA modification"/>
    <property type="evidence" value="ECO:0007669"/>
    <property type="project" value="UniProtKB-UniRule"/>
</dbReference>
<dbReference type="Gene3D" id="3.30.1130.10">
    <property type="match status" value="2"/>
</dbReference>
<dbReference type="HAMAP" id="MF_00817">
    <property type="entry name" value="QueF_type2"/>
    <property type="match status" value="1"/>
</dbReference>
<dbReference type="InterPro" id="IPR043133">
    <property type="entry name" value="GTP-CH-I_C/QueF"/>
</dbReference>
<dbReference type="InterPro" id="IPR050084">
    <property type="entry name" value="NADPH_dep_7-cyano-7-deazaG_red"/>
</dbReference>
<dbReference type="InterPro" id="IPR029500">
    <property type="entry name" value="QueF"/>
</dbReference>
<dbReference type="InterPro" id="IPR029139">
    <property type="entry name" value="QueF_N"/>
</dbReference>
<dbReference type="InterPro" id="IPR016428">
    <property type="entry name" value="QueF_type2"/>
</dbReference>
<dbReference type="NCBIfam" id="TIGR03138">
    <property type="entry name" value="QueF"/>
    <property type="match status" value="1"/>
</dbReference>
<dbReference type="PANTHER" id="PTHR34354">
    <property type="entry name" value="NADPH-DEPENDENT 7-CYANO-7-DEAZAGUANINE REDUCTASE"/>
    <property type="match status" value="1"/>
</dbReference>
<dbReference type="PANTHER" id="PTHR34354:SF1">
    <property type="entry name" value="NADPH-DEPENDENT 7-CYANO-7-DEAZAGUANINE REDUCTASE"/>
    <property type="match status" value="1"/>
</dbReference>
<dbReference type="Pfam" id="PF14489">
    <property type="entry name" value="QueF"/>
    <property type="match status" value="1"/>
</dbReference>
<dbReference type="Pfam" id="PF14819">
    <property type="entry name" value="QueF_N"/>
    <property type="match status" value="1"/>
</dbReference>
<dbReference type="PIRSF" id="PIRSF004750">
    <property type="entry name" value="Nitrile_oxidored_YqcD_prd"/>
    <property type="match status" value="1"/>
</dbReference>
<dbReference type="SUPFAM" id="SSF55620">
    <property type="entry name" value="Tetrahydrobiopterin biosynthesis enzymes-like"/>
    <property type="match status" value="1"/>
</dbReference>
<reference key="1">
    <citation type="journal article" date="2002" name="Science">
        <title>50 million years of genomic stasis in endosymbiotic bacteria.</title>
        <authorList>
            <person name="Tamas I."/>
            <person name="Klasson L."/>
            <person name="Canbaeck B."/>
            <person name="Naeslund A.K."/>
            <person name="Eriksson A.-S."/>
            <person name="Wernegreen J.J."/>
            <person name="Sandstroem J.P."/>
            <person name="Moran N.A."/>
            <person name="Andersson S.G.E."/>
        </authorList>
    </citation>
    <scope>NUCLEOTIDE SEQUENCE [LARGE SCALE GENOMIC DNA]</scope>
    <source>
        <strain>Sg</strain>
    </source>
</reference>
<reference key="2">
    <citation type="journal article" date="1995" name="Curr. Microbiol.">
        <title>Buchnera aphidicola (aphid-endosymbiont) glyceraldehyde-3-phosphate dehydrogenase: molecular cloning and sequence analysis.</title>
        <authorList>
            <person name="Kolibachuk D."/>
            <person name="Baumann P."/>
        </authorList>
    </citation>
    <scope>NUCLEOTIDE SEQUENCE [GENOMIC DNA] OF 15-262</scope>
</reference>
<sequence>MSLKINNFNFLRPISRKKHRKKIKLNCLNLPFKGKDIWTLYELSWLNKNGLPQIAIAKIEIDVNSANIIESKSFKIYINSFNQMKFNNNIDFINILTNDLTKCICGQISIKLFSLDAIKNETITDFHGICIDNQNIKIESYKYTPSFLMINSERKIIKEDLYTHLFKSNCPVTQQPDWASIYIAYTGLSINHASLLRYLISFRSHNEFHEECIERIFNDINNICKPEELSVYARYTRRGGIDINPWRSNTNFSPFLTRLARQ</sequence>
<feature type="chain" id="PRO_0000163023" description="NADPH-dependent 7-cyano-7-deazaguanine reductase">
    <location>
        <begin position="1"/>
        <end position="262"/>
    </location>
</feature>
<feature type="active site" description="Thioimide intermediate" evidence="1">
    <location>
        <position position="170"/>
    </location>
</feature>
<feature type="active site" description="Proton donor" evidence="1">
    <location>
        <position position="177"/>
    </location>
</feature>
<feature type="binding site" evidence="1">
    <location>
        <begin position="69"/>
        <end position="71"/>
    </location>
    <ligand>
        <name>substrate</name>
    </ligand>
</feature>
<feature type="binding site" evidence="1">
    <location>
        <begin position="71"/>
        <end position="72"/>
    </location>
    <ligand>
        <name>NADPH</name>
        <dbReference type="ChEBI" id="CHEBI:57783"/>
    </ligand>
</feature>
<feature type="binding site" evidence="1">
    <location>
        <begin position="209"/>
        <end position="210"/>
    </location>
    <ligand>
        <name>substrate</name>
    </ligand>
</feature>
<feature type="binding site" evidence="1">
    <location>
        <begin position="238"/>
        <end position="239"/>
    </location>
    <ligand>
        <name>NADPH</name>
        <dbReference type="ChEBI" id="CHEBI:57783"/>
    </ligand>
</feature>
<feature type="sequence conflict" description="In Ref. 2; AAC05800." evidence="2" ref="2">
    <original>L</original>
    <variation>I</variation>
    <location>
        <position position="28"/>
    </location>
</feature>
<organism>
    <name type="scientific">Buchnera aphidicola subsp. Schizaphis graminum (strain Sg)</name>
    <dbReference type="NCBI Taxonomy" id="198804"/>
    <lineage>
        <taxon>Bacteria</taxon>
        <taxon>Pseudomonadati</taxon>
        <taxon>Pseudomonadota</taxon>
        <taxon>Gammaproteobacteria</taxon>
        <taxon>Enterobacterales</taxon>
        <taxon>Erwiniaceae</taxon>
        <taxon>Buchnera</taxon>
    </lineage>
</organism>
<accession>Q8K9N6</accession>
<accession>O69229</accession>
<comment type="function">
    <text evidence="1">Catalyzes the NADPH-dependent reduction of 7-cyano-7-deazaguanine (preQ0) to 7-aminomethyl-7-deazaguanine (preQ1).</text>
</comment>
<comment type="catalytic activity">
    <reaction evidence="1">
        <text>7-aminomethyl-7-carbaguanine + 2 NADP(+) = 7-cyano-7-deazaguanine + 2 NADPH + 3 H(+)</text>
        <dbReference type="Rhea" id="RHEA:13409"/>
        <dbReference type="ChEBI" id="CHEBI:15378"/>
        <dbReference type="ChEBI" id="CHEBI:45075"/>
        <dbReference type="ChEBI" id="CHEBI:57783"/>
        <dbReference type="ChEBI" id="CHEBI:58349"/>
        <dbReference type="ChEBI" id="CHEBI:58703"/>
        <dbReference type="EC" id="1.7.1.13"/>
    </reaction>
</comment>
<comment type="pathway">
    <text evidence="1">tRNA modification; tRNA-queuosine biosynthesis.</text>
</comment>
<comment type="subunit">
    <text evidence="1">Homodimer.</text>
</comment>
<comment type="subcellular location">
    <subcellularLocation>
        <location evidence="1">Cytoplasm</location>
    </subcellularLocation>
</comment>
<comment type="similarity">
    <text evidence="1">Belongs to the GTP cyclohydrolase I family. QueF type 2 subfamily.</text>
</comment>
<evidence type="ECO:0000255" key="1">
    <source>
        <dbReference type="HAMAP-Rule" id="MF_00817"/>
    </source>
</evidence>
<evidence type="ECO:0000305" key="2"/>
<protein>
    <recommendedName>
        <fullName evidence="1">NADPH-dependent 7-cyano-7-deazaguanine reductase</fullName>
        <ecNumber evidence="1">1.7.1.13</ecNumber>
    </recommendedName>
    <alternativeName>
        <fullName evidence="1">7-cyano-7-carbaguanine reductase</fullName>
    </alternativeName>
    <alternativeName>
        <fullName evidence="1">NADPH-dependent nitrile oxidoreductase</fullName>
    </alternativeName>
    <alternativeName>
        <fullName evidence="1">PreQ(0) reductase</fullName>
    </alternativeName>
</protein>